<name>RWDD4_HUMAN</name>
<proteinExistence type="evidence at protein level"/>
<protein>
    <recommendedName>
        <fullName>RWD domain-containing protein 4</fullName>
    </recommendedName>
    <alternativeName>
        <fullName>Protein FAM28A</fullName>
    </alternativeName>
</protein>
<comment type="interaction">
    <interactant intactId="EBI-743971">
        <id>Q6NW29</id>
    </interactant>
    <interactant intactId="EBI-7133736">
        <id>P07686</id>
        <label>HEXB</label>
    </interactant>
    <organismsDiffer>false</organismsDiffer>
    <experiments>3</experiments>
</comment>
<comment type="interaction">
    <interactant intactId="EBI-743971">
        <id>Q6NW29</id>
    </interactant>
    <interactant intactId="EBI-373456">
        <id>Q9Y3S2</id>
        <label>ZNF330</label>
    </interactant>
    <organismsDiffer>false</organismsDiffer>
    <experiments>8</experiments>
</comment>
<comment type="alternative products">
    <event type="alternative splicing"/>
    <isoform>
        <id>Q6NW29-1</id>
        <name>1</name>
        <sequence type="displayed"/>
    </isoform>
    <isoform>
        <id>Q6NW29-2</id>
        <name>2</name>
        <sequence type="described" ref="VSP_056650"/>
    </isoform>
</comment>
<comment type="sequence caution" evidence="5">
    <conflict type="erroneous gene model prediction">
        <sequence resource="EMBL-CDS" id="AAQ96848"/>
    </conflict>
</comment>
<feature type="initiator methionine" description="Removed" evidence="6">
    <location>
        <position position="1"/>
    </location>
</feature>
<feature type="chain" id="PRO_0000076307" description="RWD domain-containing protein 4">
    <location>
        <begin position="2"/>
        <end position="188"/>
    </location>
</feature>
<feature type="domain" description="RWD" evidence="1">
    <location>
        <begin position="9"/>
        <end position="111"/>
    </location>
</feature>
<feature type="region of interest" description="Disordered" evidence="2">
    <location>
        <begin position="132"/>
        <end position="167"/>
    </location>
</feature>
<feature type="compositionally biased region" description="Basic and acidic residues" evidence="2">
    <location>
        <begin position="155"/>
        <end position="166"/>
    </location>
</feature>
<feature type="modified residue" description="N-acetylserine" evidence="6">
    <location>
        <position position="2"/>
    </location>
</feature>
<feature type="splice variant" id="VSP_056650" description="In isoform 2." evidence="4">
    <location>
        <begin position="1"/>
        <end position="95"/>
    </location>
</feature>
<feature type="sequence variant" id="VAR_024928" description="In dbSNP:rs10015804." evidence="3">
    <original>I</original>
    <variation>L</variation>
    <location>
        <position position="124"/>
    </location>
</feature>
<feature type="sequence conflict" description="In Ref. 2." evidence="5" ref="2">
    <original>E</original>
    <variation>G</variation>
    <location>
        <position position="19"/>
    </location>
</feature>
<feature type="sequence conflict" description="In Ref. 2." evidence="5" ref="2">
    <original>Y</original>
    <variation>H</variation>
    <location>
        <position position="34"/>
    </location>
</feature>
<feature type="sequence conflict" description="In Ref. 2; AAQ96848." evidence="5" ref="2">
    <original>V</original>
    <variation>A</variation>
    <location>
        <position position="88"/>
    </location>
</feature>
<dbReference type="EMBL" id="AK293274">
    <property type="protein sequence ID" value="BAG56803.1"/>
    <property type="molecule type" value="mRNA"/>
</dbReference>
<dbReference type="EMBL" id="AK315515">
    <property type="protein sequence ID" value="BAG37896.1"/>
    <property type="molecule type" value="mRNA"/>
</dbReference>
<dbReference type="EMBL" id="AC093081">
    <property type="protein sequence ID" value="AAQ96848.1"/>
    <property type="status" value="ALT_SEQ"/>
    <property type="molecule type" value="Genomic_DNA"/>
</dbReference>
<dbReference type="EMBL" id="BC017472">
    <property type="protein sequence ID" value="AAH17472.1"/>
    <property type="molecule type" value="mRNA"/>
</dbReference>
<dbReference type="EMBL" id="BC067752">
    <property type="protein sequence ID" value="AAH67752.1"/>
    <property type="molecule type" value="mRNA"/>
</dbReference>
<dbReference type="EMBL" id="BC107432">
    <property type="protein sequence ID" value="AAI07433.1"/>
    <property type="molecule type" value="mRNA"/>
</dbReference>
<dbReference type="CCDS" id="CCDS34111.1">
    <molecule id="Q6NW29-1"/>
</dbReference>
<dbReference type="RefSeq" id="NP_001294851.1">
    <property type="nucleotide sequence ID" value="NM_001307922.1"/>
</dbReference>
<dbReference type="RefSeq" id="NP_689895.2">
    <molecule id="Q6NW29-1"/>
    <property type="nucleotide sequence ID" value="NM_152682.4"/>
</dbReference>
<dbReference type="SMR" id="Q6NW29"/>
<dbReference type="BioGRID" id="128409">
    <property type="interactions" value="22"/>
</dbReference>
<dbReference type="FunCoup" id="Q6NW29">
    <property type="interactions" value="1139"/>
</dbReference>
<dbReference type="IntAct" id="Q6NW29">
    <property type="interactions" value="12"/>
</dbReference>
<dbReference type="STRING" id="9606.ENSP00000388920"/>
<dbReference type="iPTMnet" id="Q6NW29"/>
<dbReference type="PhosphoSitePlus" id="Q6NW29"/>
<dbReference type="BioMuta" id="RWDD4"/>
<dbReference type="DMDM" id="116242778"/>
<dbReference type="jPOST" id="Q6NW29"/>
<dbReference type="MassIVE" id="Q6NW29"/>
<dbReference type="PaxDb" id="9606-ENSP00000388920"/>
<dbReference type="PeptideAtlas" id="Q6NW29"/>
<dbReference type="ProteomicsDB" id="3876"/>
<dbReference type="ProteomicsDB" id="66737">
    <molecule id="Q6NW29-1"/>
</dbReference>
<dbReference type="Pumba" id="Q6NW29"/>
<dbReference type="Antibodypedia" id="45760">
    <property type="antibodies" value="44 antibodies from 10 providers"/>
</dbReference>
<dbReference type="DNASU" id="201965"/>
<dbReference type="Ensembl" id="ENST00000326397.10">
    <molecule id="Q6NW29-1"/>
    <property type="protein sequence ID" value="ENSP00000388920.2"/>
    <property type="gene ID" value="ENSG00000182552.15"/>
</dbReference>
<dbReference type="Ensembl" id="ENST00000510968.5">
    <molecule id="Q6NW29-2"/>
    <property type="protein sequence ID" value="ENSP00000426329.1"/>
    <property type="gene ID" value="ENSG00000182552.15"/>
</dbReference>
<dbReference type="GeneID" id="201965"/>
<dbReference type="KEGG" id="hsa:201965"/>
<dbReference type="MANE-Select" id="ENST00000326397.10">
    <property type="protein sequence ID" value="ENSP00000388920.2"/>
    <property type="RefSeq nucleotide sequence ID" value="NM_152682.4"/>
    <property type="RefSeq protein sequence ID" value="NP_689895.2"/>
</dbReference>
<dbReference type="UCSC" id="uc063bgm.1">
    <molecule id="Q6NW29-1"/>
    <property type="organism name" value="human"/>
</dbReference>
<dbReference type="AGR" id="HGNC:23750"/>
<dbReference type="CTD" id="201965"/>
<dbReference type="DisGeNET" id="201965"/>
<dbReference type="GeneCards" id="RWDD4"/>
<dbReference type="HGNC" id="HGNC:23750">
    <property type="gene designation" value="RWDD4"/>
</dbReference>
<dbReference type="HPA" id="ENSG00000182552">
    <property type="expression patterns" value="Low tissue specificity"/>
</dbReference>
<dbReference type="neXtProt" id="NX_Q6NW29"/>
<dbReference type="OpenTargets" id="ENSG00000182552"/>
<dbReference type="PharmGKB" id="PA142670965"/>
<dbReference type="VEuPathDB" id="HostDB:ENSG00000182552"/>
<dbReference type="eggNOG" id="KOG4018">
    <property type="taxonomic scope" value="Eukaryota"/>
</dbReference>
<dbReference type="GeneTree" id="ENSGT00390000015545"/>
<dbReference type="HOGENOM" id="CLU_123949_0_0_1"/>
<dbReference type="InParanoid" id="Q6NW29"/>
<dbReference type="OMA" id="CGMTYTL"/>
<dbReference type="OrthoDB" id="10045773at2759"/>
<dbReference type="PAN-GO" id="Q6NW29">
    <property type="GO annotations" value="0 GO annotations based on evolutionary models"/>
</dbReference>
<dbReference type="PhylomeDB" id="Q6NW29"/>
<dbReference type="TreeFam" id="TF326409"/>
<dbReference type="PathwayCommons" id="Q6NW29"/>
<dbReference type="SignaLink" id="Q6NW29"/>
<dbReference type="BioGRID-ORCS" id="201965">
    <property type="hits" value="111 hits in 1116 CRISPR screens"/>
</dbReference>
<dbReference type="GenomeRNAi" id="201965"/>
<dbReference type="Pharos" id="Q6NW29">
    <property type="development level" value="Tdark"/>
</dbReference>
<dbReference type="PRO" id="PR:Q6NW29"/>
<dbReference type="Proteomes" id="UP000005640">
    <property type="component" value="Chromosome 4"/>
</dbReference>
<dbReference type="RNAct" id="Q6NW29">
    <property type="molecule type" value="protein"/>
</dbReference>
<dbReference type="Bgee" id="ENSG00000182552">
    <property type="expression patterns" value="Expressed in secondary oocyte and 191 other cell types or tissues"/>
</dbReference>
<dbReference type="ExpressionAtlas" id="Q6NW29">
    <property type="expression patterns" value="baseline and differential"/>
</dbReference>
<dbReference type="CDD" id="cd23817">
    <property type="entry name" value="RWD-RWDD4"/>
    <property type="match status" value="1"/>
</dbReference>
<dbReference type="Gene3D" id="3.10.110.10">
    <property type="entry name" value="Ubiquitin Conjugating Enzyme"/>
    <property type="match status" value="1"/>
</dbReference>
<dbReference type="InterPro" id="IPR006575">
    <property type="entry name" value="RWD_dom"/>
</dbReference>
<dbReference type="InterPro" id="IPR042770">
    <property type="entry name" value="RWDD4"/>
</dbReference>
<dbReference type="InterPro" id="IPR016135">
    <property type="entry name" value="UBQ-conjugating_enzyme/RWD"/>
</dbReference>
<dbReference type="PANTHER" id="PTHR21275">
    <property type="entry name" value="RWD DOMAIN-CONTAINING PROTEIN 4"/>
    <property type="match status" value="1"/>
</dbReference>
<dbReference type="PANTHER" id="PTHR21275:SF1">
    <property type="entry name" value="RWD DOMAIN-CONTAINING PROTEIN 4"/>
    <property type="match status" value="1"/>
</dbReference>
<dbReference type="Pfam" id="PF05773">
    <property type="entry name" value="RWD"/>
    <property type="match status" value="1"/>
</dbReference>
<dbReference type="SMART" id="SM00591">
    <property type="entry name" value="RWD"/>
    <property type="match status" value="1"/>
</dbReference>
<dbReference type="SUPFAM" id="SSF54495">
    <property type="entry name" value="UBC-like"/>
    <property type="match status" value="1"/>
</dbReference>
<dbReference type="PROSITE" id="PS50908">
    <property type="entry name" value="RWD"/>
    <property type="match status" value="1"/>
</dbReference>
<organism>
    <name type="scientific">Homo sapiens</name>
    <name type="common">Human</name>
    <dbReference type="NCBI Taxonomy" id="9606"/>
    <lineage>
        <taxon>Eukaryota</taxon>
        <taxon>Metazoa</taxon>
        <taxon>Chordata</taxon>
        <taxon>Craniata</taxon>
        <taxon>Vertebrata</taxon>
        <taxon>Euteleostomi</taxon>
        <taxon>Mammalia</taxon>
        <taxon>Eutheria</taxon>
        <taxon>Euarchontoglires</taxon>
        <taxon>Primates</taxon>
        <taxon>Haplorrhini</taxon>
        <taxon>Catarrhini</taxon>
        <taxon>Hominidae</taxon>
        <taxon>Homo</taxon>
    </lineage>
</organism>
<gene>
    <name type="primary">RWDD4</name>
    <name type="synonym">FAM28A</name>
    <name type="synonym">RWDD4A</name>
</gene>
<keyword id="KW-0007">Acetylation</keyword>
<keyword id="KW-0025">Alternative splicing</keyword>
<keyword id="KW-1267">Proteomics identification</keyword>
<keyword id="KW-1185">Reference proteome</keyword>
<evidence type="ECO:0000255" key="1">
    <source>
        <dbReference type="PROSITE-ProRule" id="PRU00179"/>
    </source>
</evidence>
<evidence type="ECO:0000256" key="2">
    <source>
        <dbReference type="SAM" id="MobiDB-lite"/>
    </source>
</evidence>
<evidence type="ECO:0000269" key="3">
    <source>
    </source>
</evidence>
<evidence type="ECO:0000303" key="4">
    <source>
    </source>
</evidence>
<evidence type="ECO:0000305" key="5"/>
<evidence type="ECO:0007744" key="6">
    <source>
    </source>
</evidence>
<sequence length="188" mass="21251">MSANEDQEMELEALRSIYEGDESFRELSPVSFQYRIGENGDPKAFLIEISWTETYPQTPPILSMNAFFNNTISSAVKQSILAKLQEAVEANLGTAMTYTLFEYAKDNKEQFMENHNPINSATSISNIISIETPNTAPSSKKKDKKEQLSKAQKRKLADKTDHKGELPRGWNWVDVVKHLSKTGSKDDE</sequence>
<reference key="1">
    <citation type="journal article" date="2004" name="Nat. Genet.">
        <title>Complete sequencing and characterization of 21,243 full-length human cDNAs.</title>
        <authorList>
            <person name="Ota T."/>
            <person name="Suzuki Y."/>
            <person name="Nishikawa T."/>
            <person name="Otsuki T."/>
            <person name="Sugiyama T."/>
            <person name="Irie R."/>
            <person name="Wakamatsu A."/>
            <person name="Hayashi K."/>
            <person name="Sato H."/>
            <person name="Nagai K."/>
            <person name="Kimura K."/>
            <person name="Makita H."/>
            <person name="Sekine M."/>
            <person name="Obayashi M."/>
            <person name="Nishi T."/>
            <person name="Shibahara T."/>
            <person name="Tanaka T."/>
            <person name="Ishii S."/>
            <person name="Yamamoto J."/>
            <person name="Saito K."/>
            <person name="Kawai Y."/>
            <person name="Isono Y."/>
            <person name="Nakamura Y."/>
            <person name="Nagahari K."/>
            <person name="Murakami K."/>
            <person name="Yasuda T."/>
            <person name="Iwayanagi T."/>
            <person name="Wagatsuma M."/>
            <person name="Shiratori A."/>
            <person name="Sudo H."/>
            <person name="Hosoiri T."/>
            <person name="Kaku Y."/>
            <person name="Kodaira H."/>
            <person name="Kondo H."/>
            <person name="Sugawara M."/>
            <person name="Takahashi M."/>
            <person name="Kanda K."/>
            <person name="Yokoi T."/>
            <person name="Furuya T."/>
            <person name="Kikkawa E."/>
            <person name="Omura Y."/>
            <person name="Abe K."/>
            <person name="Kamihara K."/>
            <person name="Katsuta N."/>
            <person name="Sato K."/>
            <person name="Tanikawa M."/>
            <person name="Yamazaki M."/>
            <person name="Ninomiya K."/>
            <person name="Ishibashi T."/>
            <person name="Yamashita H."/>
            <person name="Murakawa K."/>
            <person name="Fujimori K."/>
            <person name="Tanai H."/>
            <person name="Kimata M."/>
            <person name="Watanabe M."/>
            <person name="Hiraoka S."/>
            <person name="Chiba Y."/>
            <person name="Ishida S."/>
            <person name="Ono Y."/>
            <person name="Takiguchi S."/>
            <person name="Watanabe S."/>
            <person name="Yosida M."/>
            <person name="Hotuta T."/>
            <person name="Kusano J."/>
            <person name="Kanehori K."/>
            <person name="Takahashi-Fujii A."/>
            <person name="Hara H."/>
            <person name="Tanase T.-O."/>
            <person name="Nomura Y."/>
            <person name="Togiya S."/>
            <person name="Komai F."/>
            <person name="Hara R."/>
            <person name="Takeuchi K."/>
            <person name="Arita M."/>
            <person name="Imose N."/>
            <person name="Musashino K."/>
            <person name="Yuuki H."/>
            <person name="Oshima A."/>
            <person name="Sasaki N."/>
            <person name="Aotsuka S."/>
            <person name="Yoshikawa Y."/>
            <person name="Matsunawa H."/>
            <person name="Ichihara T."/>
            <person name="Shiohata N."/>
            <person name="Sano S."/>
            <person name="Moriya S."/>
            <person name="Momiyama H."/>
            <person name="Satoh N."/>
            <person name="Takami S."/>
            <person name="Terashima Y."/>
            <person name="Suzuki O."/>
            <person name="Nakagawa S."/>
            <person name="Senoh A."/>
            <person name="Mizoguchi H."/>
            <person name="Goto Y."/>
            <person name="Shimizu F."/>
            <person name="Wakebe H."/>
            <person name="Hishigaki H."/>
            <person name="Watanabe T."/>
            <person name="Sugiyama A."/>
            <person name="Takemoto M."/>
            <person name="Kawakami B."/>
            <person name="Yamazaki M."/>
            <person name="Watanabe K."/>
            <person name="Kumagai A."/>
            <person name="Itakura S."/>
            <person name="Fukuzumi Y."/>
            <person name="Fujimori Y."/>
            <person name="Komiyama M."/>
            <person name="Tashiro H."/>
            <person name="Tanigami A."/>
            <person name="Fujiwara T."/>
            <person name="Ono T."/>
            <person name="Yamada K."/>
            <person name="Fujii Y."/>
            <person name="Ozaki K."/>
            <person name="Hirao M."/>
            <person name="Ohmori Y."/>
            <person name="Kawabata A."/>
            <person name="Hikiji T."/>
            <person name="Kobatake N."/>
            <person name="Inagaki H."/>
            <person name="Ikema Y."/>
            <person name="Okamoto S."/>
            <person name="Okitani R."/>
            <person name="Kawakami T."/>
            <person name="Noguchi S."/>
            <person name="Itoh T."/>
            <person name="Shigeta K."/>
            <person name="Senba T."/>
            <person name="Matsumura K."/>
            <person name="Nakajima Y."/>
            <person name="Mizuno T."/>
            <person name="Morinaga M."/>
            <person name="Sasaki M."/>
            <person name="Togashi T."/>
            <person name="Oyama M."/>
            <person name="Hata H."/>
            <person name="Watanabe M."/>
            <person name="Komatsu T."/>
            <person name="Mizushima-Sugano J."/>
            <person name="Satoh T."/>
            <person name="Shirai Y."/>
            <person name="Takahashi Y."/>
            <person name="Nakagawa K."/>
            <person name="Okumura K."/>
            <person name="Nagase T."/>
            <person name="Nomura N."/>
            <person name="Kikuchi H."/>
            <person name="Masuho Y."/>
            <person name="Yamashita R."/>
            <person name="Nakai K."/>
            <person name="Yada T."/>
            <person name="Nakamura Y."/>
            <person name="Ohara O."/>
            <person name="Isogai T."/>
            <person name="Sugano S."/>
        </authorList>
    </citation>
    <scope>NUCLEOTIDE SEQUENCE [LARGE SCALE MRNA] (ISOFORMS 1 AND 2)</scope>
    <source>
        <tissue>Tongue</tissue>
    </source>
</reference>
<reference key="2">
    <citation type="journal article" date="2005" name="Nature">
        <title>Generation and annotation of the DNA sequences of human chromosomes 2 and 4.</title>
        <authorList>
            <person name="Hillier L.W."/>
            <person name="Graves T.A."/>
            <person name="Fulton R.S."/>
            <person name="Fulton L.A."/>
            <person name="Pepin K.H."/>
            <person name="Minx P."/>
            <person name="Wagner-McPherson C."/>
            <person name="Layman D."/>
            <person name="Wylie K."/>
            <person name="Sekhon M."/>
            <person name="Becker M.C."/>
            <person name="Fewell G.A."/>
            <person name="Delehaunty K.D."/>
            <person name="Miner T.L."/>
            <person name="Nash W.E."/>
            <person name="Kremitzki C."/>
            <person name="Oddy L."/>
            <person name="Du H."/>
            <person name="Sun H."/>
            <person name="Bradshaw-Cordum H."/>
            <person name="Ali J."/>
            <person name="Carter J."/>
            <person name="Cordes M."/>
            <person name="Harris A."/>
            <person name="Isak A."/>
            <person name="van Brunt A."/>
            <person name="Nguyen C."/>
            <person name="Du F."/>
            <person name="Courtney L."/>
            <person name="Kalicki J."/>
            <person name="Ozersky P."/>
            <person name="Abbott S."/>
            <person name="Armstrong J."/>
            <person name="Belter E.A."/>
            <person name="Caruso L."/>
            <person name="Cedroni M."/>
            <person name="Cotton M."/>
            <person name="Davidson T."/>
            <person name="Desai A."/>
            <person name="Elliott G."/>
            <person name="Erb T."/>
            <person name="Fronick C."/>
            <person name="Gaige T."/>
            <person name="Haakenson W."/>
            <person name="Haglund K."/>
            <person name="Holmes A."/>
            <person name="Harkins R."/>
            <person name="Kim K."/>
            <person name="Kruchowski S.S."/>
            <person name="Strong C.M."/>
            <person name="Grewal N."/>
            <person name="Goyea E."/>
            <person name="Hou S."/>
            <person name="Levy A."/>
            <person name="Martinka S."/>
            <person name="Mead K."/>
            <person name="McLellan M.D."/>
            <person name="Meyer R."/>
            <person name="Randall-Maher J."/>
            <person name="Tomlinson C."/>
            <person name="Dauphin-Kohlberg S."/>
            <person name="Kozlowicz-Reilly A."/>
            <person name="Shah N."/>
            <person name="Swearengen-Shahid S."/>
            <person name="Snider J."/>
            <person name="Strong J.T."/>
            <person name="Thompson J."/>
            <person name="Yoakum M."/>
            <person name="Leonard S."/>
            <person name="Pearman C."/>
            <person name="Trani L."/>
            <person name="Radionenko M."/>
            <person name="Waligorski J.E."/>
            <person name="Wang C."/>
            <person name="Rock S.M."/>
            <person name="Tin-Wollam A.-M."/>
            <person name="Maupin R."/>
            <person name="Latreille P."/>
            <person name="Wendl M.C."/>
            <person name="Yang S.-P."/>
            <person name="Pohl C."/>
            <person name="Wallis J.W."/>
            <person name="Spieth J."/>
            <person name="Bieri T.A."/>
            <person name="Berkowicz N."/>
            <person name="Nelson J.O."/>
            <person name="Osborne J."/>
            <person name="Ding L."/>
            <person name="Meyer R."/>
            <person name="Sabo A."/>
            <person name="Shotland Y."/>
            <person name="Sinha P."/>
            <person name="Wohldmann P.E."/>
            <person name="Cook L.L."/>
            <person name="Hickenbotham M.T."/>
            <person name="Eldred J."/>
            <person name="Williams D."/>
            <person name="Jones T.A."/>
            <person name="She X."/>
            <person name="Ciccarelli F.D."/>
            <person name="Izaurralde E."/>
            <person name="Taylor J."/>
            <person name="Schmutz J."/>
            <person name="Myers R.M."/>
            <person name="Cox D.R."/>
            <person name="Huang X."/>
            <person name="McPherson J.D."/>
            <person name="Mardis E.R."/>
            <person name="Clifton S.W."/>
            <person name="Warren W.C."/>
            <person name="Chinwalla A.T."/>
            <person name="Eddy S.R."/>
            <person name="Marra M.A."/>
            <person name="Ovcharenko I."/>
            <person name="Furey T.S."/>
            <person name="Miller W."/>
            <person name="Eichler E.E."/>
            <person name="Bork P."/>
            <person name="Suyama M."/>
            <person name="Torrents D."/>
            <person name="Waterston R.H."/>
            <person name="Wilson R.K."/>
        </authorList>
    </citation>
    <scope>NUCLEOTIDE SEQUENCE [LARGE SCALE GENOMIC DNA]</scope>
</reference>
<reference key="3">
    <citation type="journal article" date="2004" name="Genome Res.">
        <title>The status, quality, and expansion of the NIH full-length cDNA project: the Mammalian Gene Collection (MGC).</title>
        <authorList>
            <consortium name="The MGC Project Team"/>
        </authorList>
    </citation>
    <scope>NUCLEOTIDE SEQUENCE [LARGE SCALE MRNA] (ISOFORM 1)</scope>
    <scope>VARIANT LEU-124</scope>
    <source>
        <tissue>Testis</tissue>
        <tissue>Uterus</tissue>
    </source>
</reference>
<reference key="4">
    <citation type="journal article" date="2010" name="Sci. Signal.">
        <title>Quantitative phosphoproteomics reveals widespread full phosphorylation site occupancy during mitosis.</title>
        <authorList>
            <person name="Olsen J.V."/>
            <person name="Vermeulen M."/>
            <person name="Santamaria A."/>
            <person name="Kumar C."/>
            <person name="Miller M.L."/>
            <person name="Jensen L.J."/>
            <person name="Gnad F."/>
            <person name="Cox J."/>
            <person name="Jensen T.S."/>
            <person name="Nigg E.A."/>
            <person name="Brunak S."/>
            <person name="Mann M."/>
        </authorList>
    </citation>
    <scope>IDENTIFICATION BY MASS SPECTROMETRY [LARGE SCALE ANALYSIS]</scope>
    <source>
        <tissue>Cervix carcinoma</tissue>
    </source>
</reference>
<reference key="5">
    <citation type="journal article" date="2011" name="BMC Syst. Biol.">
        <title>Initial characterization of the human central proteome.</title>
        <authorList>
            <person name="Burkard T.R."/>
            <person name="Planyavsky M."/>
            <person name="Kaupe I."/>
            <person name="Breitwieser F.P."/>
            <person name="Buerckstuemmer T."/>
            <person name="Bennett K.L."/>
            <person name="Superti-Furga G."/>
            <person name="Colinge J."/>
        </authorList>
    </citation>
    <scope>IDENTIFICATION BY MASS SPECTROMETRY [LARGE SCALE ANALYSIS]</scope>
</reference>
<reference key="6">
    <citation type="journal article" date="2012" name="Proc. Natl. Acad. Sci. U.S.A.">
        <title>N-terminal acetylome analyses and functional insights of the N-terminal acetyltransferase NatB.</title>
        <authorList>
            <person name="Van Damme P."/>
            <person name="Lasa M."/>
            <person name="Polevoda B."/>
            <person name="Gazquez C."/>
            <person name="Elosegui-Artola A."/>
            <person name="Kim D.S."/>
            <person name="De Juan-Pardo E."/>
            <person name="Demeyer K."/>
            <person name="Hole K."/>
            <person name="Larrea E."/>
            <person name="Timmerman E."/>
            <person name="Prieto J."/>
            <person name="Arnesen T."/>
            <person name="Sherman F."/>
            <person name="Gevaert K."/>
            <person name="Aldabe R."/>
        </authorList>
    </citation>
    <scope>ACETYLATION [LARGE SCALE ANALYSIS] AT SER-2</scope>
    <scope>CLEAVAGE OF INITIATOR METHIONINE [LARGE SCALE ANALYSIS]</scope>
    <scope>IDENTIFICATION BY MASS SPECTROMETRY [LARGE SCALE ANALYSIS]</scope>
</reference>
<accession>Q6NW29</accession>
<accession>B2RDE9</accession>
<accession>B4DDP2</accession>
<accession>Q75LA9</accession>
<accession>Q8WVW2</accession>